<accession>B0JI39</accession>
<reference key="1">
    <citation type="journal article" date="2007" name="DNA Res.">
        <title>Complete genomic structure of the bloom-forming toxic cyanobacterium Microcystis aeruginosa NIES-843.</title>
        <authorList>
            <person name="Kaneko T."/>
            <person name="Nakajima N."/>
            <person name="Okamoto S."/>
            <person name="Suzuki I."/>
            <person name="Tanabe Y."/>
            <person name="Tamaoki M."/>
            <person name="Nakamura Y."/>
            <person name="Kasai F."/>
            <person name="Watanabe A."/>
            <person name="Kawashima K."/>
            <person name="Kishida Y."/>
            <person name="Ono A."/>
            <person name="Shimizu Y."/>
            <person name="Takahashi C."/>
            <person name="Minami C."/>
            <person name="Fujishiro T."/>
            <person name="Kohara M."/>
            <person name="Katoh M."/>
            <person name="Nakazaki N."/>
            <person name="Nakayama S."/>
            <person name="Yamada M."/>
            <person name="Tabata S."/>
            <person name="Watanabe M.M."/>
        </authorList>
    </citation>
    <scope>NUCLEOTIDE SEQUENCE [LARGE SCALE GENOMIC DNA]</scope>
    <source>
        <strain>NIES-843 / IAM M-247</strain>
    </source>
</reference>
<comment type="function">
    <text evidence="1">Catalyzes the oxidation of either pyridoxine 5'-phosphate (PNP) or pyridoxamine 5'-phosphate (PMP) into pyridoxal 5'-phosphate (PLP).</text>
</comment>
<comment type="catalytic activity">
    <reaction evidence="1">
        <text>pyridoxamine 5'-phosphate + O2 + H2O = pyridoxal 5'-phosphate + H2O2 + NH4(+)</text>
        <dbReference type="Rhea" id="RHEA:15817"/>
        <dbReference type="ChEBI" id="CHEBI:15377"/>
        <dbReference type="ChEBI" id="CHEBI:15379"/>
        <dbReference type="ChEBI" id="CHEBI:16240"/>
        <dbReference type="ChEBI" id="CHEBI:28938"/>
        <dbReference type="ChEBI" id="CHEBI:58451"/>
        <dbReference type="ChEBI" id="CHEBI:597326"/>
        <dbReference type="EC" id="1.4.3.5"/>
    </reaction>
</comment>
<comment type="catalytic activity">
    <reaction evidence="1">
        <text>pyridoxine 5'-phosphate + O2 = pyridoxal 5'-phosphate + H2O2</text>
        <dbReference type="Rhea" id="RHEA:15149"/>
        <dbReference type="ChEBI" id="CHEBI:15379"/>
        <dbReference type="ChEBI" id="CHEBI:16240"/>
        <dbReference type="ChEBI" id="CHEBI:58589"/>
        <dbReference type="ChEBI" id="CHEBI:597326"/>
        <dbReference type="EC" id="1.4.3.5"/>
    </reaction>
</comment>
<comment type="cofactor">
    <cofactor evidence="1">
        <name>FMN</name>
        <dbReference type="ChEBI" id="CHEBI:58210"/>
    </cofactor>
    <text evidence="1">Binds 1 FMN per subunit.</text>
</comment>
<comment type="pathway">
    <text evidence="1">Cofactor metabolism; pyridoxal 5'-phosphate salvage; pyridoxal 5'-phosphate from pyridoxamine 5'-phosphate: step 1/1.</text>
</comment>
<comment type="pathway">
    <text evidence="1">Cofactor metabolism; pyridoxal 5'-phosphate salvage; pyridoxal 5'-phosphate from pyridoxine 5'-phosphate: step 1/1.</text>
</comment>
<comment type="subunit">
    <text evidence="1">Homodimer.</text>
</comment>
<comment type="similarity">
    <text evidence="1">Belongs to the pyridoxamine 5'-phosphate oxidase family.</text>
</comment>
<dbReference type="EC" id="1.4.3.5" evidence="1"/>
<dbReference type="EMBL" id="AP009552">
    <property type="protein sequence ID" value="BAG05601.1"/>
    <property type="molecule type" value="Genomic_DNA"/>
</dbReference>
<dbReference type="RefSeq" id="WP_012267993.1">
    <property type="nucleotide sequence ID" value="NC_010296.1"/>
</dbReference>
<dbReference type="SMR" id="B0JI39"/>
<dbReference type="STRING" id="449447.MAE_57790"/>
<dbReference type="PaxDb" id="449447-MAE_57790"/>
<dbReference type="EnsemblBacteria" id="BAG05601">
    <property type="protein sequence ID" value="BAG05601"/>
    <property type="gene ID" value="MAE_57790"/>
</dbReference>
<dbReference type="GeneID" id="66705468"/>
<dbReference type="KEGG" id="mar:MAE_57790"/>
<dbReference type="eggNOG" id="COG0259">
    <property type="taxonomic scope" value="Bacteria"/>
</dbReference>
<dbReference type="HOGENOM" id="CLU_032263_2_2_3"/>
<dbReference type="BioCyc" id="MAER449447:MAE_RS25205-MONOMER"/>
<dbReference type="UniPathway" id="UPA01068">
    <property type="reaction ID" value="UER00304"/>
</dbReference>
<dbReference type="UniPathway" id="UPA01068">
    <property type="reaction ID" value="UER00305"/>
</dbReference>
<dbReference type="Proteomes" id="UP000001510">
    <property type="component" value="Chromosome"/>
</dbReference>
<dbReference type="GO" id="GO:0010181">
    <property type="term" value="F:FMN binding"/>
    <property type="evidence" value="ECO:0007669"/>
    <property type="project" value="UniProtKB-UniRule"/>
</dbReference>
<dbReference type="GO" id="GO:0004733">
    <property type="term" value="F:pyridoxamine phosphate oxidase activity"/>
    <property type="evidence" value="ECO:0007669"/>
    <property type="project" value="UniProtKB-UniRule"/>
</dbReference>
<dbReference type="GO" id="GO:0008615">
    <property type="term" value="P:pyridoxine biosynthetic process"/>
    <property type="evidence" value="ECO:0007669"/>
    <property type="project" value="UniProtKB-KW"/>
</dbReference>
<dbReference type="FunFam" id="2.30.110.10:FF:000020">
    <property type="entry name" value="PNPO isoform 11"/>
    <property type="match status" value="1"/>
</dbReference>
<dbReference type="Gene3D" id="2.30.110.10">
    <property type="entry name" value="Electron Transport, Fmn-binding Protein, Chain A"/>
    <property type="match status" value="1"/>
</dbReference>
<dbReference type="HAMAP" id="MF_01629">
    <property type="entry name" value="PdxH"/>
    <property type="match status" value="1"/>
</dbReference>
<dbReference type="InterPro" id="IPR000659">
    <property type="entry name" value="Pyridox_Oxase"/>
</dbReference>
<dbReference type="InterPro" id="IPR019740">
    <property type="entry name" value="Pyridox_Oxase_CS"/>
</dbReference>
<dbReference type="InterPro" id="IPR011576">
    <property type="entry name" value="Pyridox_Oxase_N"/>
</dbReference>
<dbReference type="InterPro" id="IPR019576">
    <property type="entry name" value="Pyridoxamine_oxidase_dimer_C"/>
</dbReference>
<dbReference type="InterPro" id="IPR012349">
    <property type="entry name" value="Split_barrel_FMN-bd"/>
</dbReference>
<dbReference type="NCBIfam" id="TIGR00558">
    <property type="entry name" value="pdxH"/>
    <property type="match status" value="1"/>
</dbReference>
<dbReference type="NCBIfam" id="NF004231">
    <property type="entry name" value="PRK05679.1"/>
    <property type="match status" value="1"/>
</dbReference>
<dbReference type="PANTHER" id="PTHR10851:SF0">
    <property type="entry name" value="PYRIDOXINE-5'-PHOSPHATE OXIDASE"/>
    <property type="match status" value="1"/>
</dbReference>
<dbReference type="PANTHER" id="PTHR10851">
    <property type="entry name" value="PYRIDOXINE-5-PHOSPHATE OXIDASE"/>
    <property type="match status" value="1"/>
</dbReference>
<dbReference type="Pfam" id="PF10590">
    <property type="entry name" value="PNP_phzG_C"/>
    <property type="match status" value="1"/>
</dbReference>
<dbReference type="Pfam" id="PF01243">
    <property type="entry name" value="PNPOx_N"/>
    <property type="match status" value="1"/>
</dbReference>
<dbReference type="PIRSF" id="PIRSF000190">
    <property type="entry name" value="Pyd_amn-ph_oxd"/>
    <property type="match status" value="1"/>
</dbReference>
<dbReference type="SUPFAM" id="SSF50475">
    <property type="entry name" value="FMN-binding split barrel"/>
    <property type="match status" value="1"/>
</dbReference>
<dbReference type="PROSITE" id="PS01064">
    <property type="entry name" value="PYRIDOX_OXIDASE"/>
    <property type="match status" value="1"/>
</dbReference>
<organism>
    <name type="scientific">Microcystis aeruginosa (strain NIES-843 / IAM M-2473)</name>
    <dbReference type="NCBI Taxonomy" id="449447"/>
    <lineage>
        <taxon>Bacteria</taxon>
        <taxon>Bacillati</taxon>
        <taxon>Cyanobacteriota</taxon>
        <taxon>Cyanophyceae</taxon>
        <taxon>Oscillatoriophycideae</taxon>
        <taxon>Chroococcales</taxon>
        <taxon>Microcystaceae</taxon>
        <taxon>Microcystis</taxon>
    </lineage>
</organism>
<keyword id="KW-0285">Flavoprotein</keyword>
<keyword id="KW-0288">FMN</keyword>
<keyword id="KW-0560">Oxidoreductase</keyword>
<keyword id="KW-0664">Pyridoxine biosynthesis</keyword>
<protein>
    <recommendedName>
        <fullName evidence="1">Pyridoxine/pyridoxamine 5'-phosphate oxidase</fullName>
        <ecNumber evidence="1">1.4.3.5</ecNumber>
    </recommendedName>
    <alternativeName>
        <fullName evidence="1">PNP/PMP oxidase</fullName>
        <shortName evidence="1">PNPOx</shortName>
    </alternativeName>
    <alternativeName>
        <fullName evidence="1">Pyridoxal 5'-phosphate synthase</fullName>
    </alternativeName>
</protein>
<proteinExistence type="inferred from homology"/>
<gene>
    <name evidence="1" type="primary">pdxH</name>
    <name type="ordered locus">MAE_57790</name>
</gene>
<name>PDXH_MICAN</name>
<sequence length="214" mass="24968">MDISIADLRLDYNLEELLESETSADPFIVFKQWLERAVSSGRLEPNAMTLATISPEGKPRARMVLLKDFDPRGFVLFTNYHSAKGQELIANPNAALVFWWGELQRQIRIEGTVEKISEEESDNYFFVRPWESRLGAWASNQSEVISGRDILEKRLTELKEEYAGREVPRPPHWGGFRLIPSLIEFWQGRPSRLHDRLCYYRQEDGSWQRQRLAP</sequence>
<feature type="chain" id="PRO_1000088114" description="Pyridoxine/pyridoxamine 5'-phosphate oxidase">
    <location>
        <begin position="1"/>
        <end position="214"/>
    </location>
</feature>
<feature type="binding site" evidence="1">
    <location>
        <begin position="9"/>
        <end position="12"/>
    </location>
    <ligand>
        <name>substrate</name>
    </ligand>
</feature>
<feature type="binding site" evidence="1">
    <location>
        <begin position="62"/>
        <end position="67"/>
    </location>
    <ligand>
        <name>FMN</name>
        <dbReference type="ChEBI" id="CHEBI:58210"/>
    </ligand>
</feature>
<feature type="binding site" evidence="1">
    <location>
        <position position="67"/>
    </location>
    <ligand>
        <name>substrate</name>
    </ligand>
</feature>
<feature type="binding site" evidence="1">
    <location>
        <begin position="77"/>
        <end position="78"/>
    </location>
    <ligand>
        <name>FMN</name>
        <dbReference type="ChEBI" id="CHEBI:58210"/>
    </ligand>
</feature>
<feature type="binding site" evidence="1">
    <location>
        <position position="84"/>
    </location>
    <ligand>
        <name>FMN</name>
        <dbReference type="ChEBI" id="CHEBI:58210"/>
    </ligand>
</feature>
<feature type="binding site" evidence="1">
    <location>
        <position position="106"/>
    </location>
    <ligand>
        <name>FMN</name>
        <dbReference type="ChEBI" id="CHEBI:58210"/>
    </ligand>
</feature>
<feature type="binding site" evidence="1">
    <location>
        <position position="124"/>
    </location>
    <ligand>
        <name>substrate</name>
    </ligand>
</feature>
<feature type="binding site" evidence="1">
    <location>
        <position position="128"/>
    </location>
    <ligand>
        <name>substrate</name>
    </ligand>
</feature>
<feature type="binding site" evidence="1">
    <location>
        <position position="132"/>
    </location>
    <ligand>
        <name>substrate</name>
    </ligand>
</feature>
<feature type="binding site" evidence="1">
    <location>
        <begin position="141"/>
        <end position="142"/>
    </location>
    <ligand>
        <name>FMN</name>
        <dbReference type="ChEBI" id="CHEBI:58210"/>
    </ligand>
</feature>
<feature type="binding site" evidence="1">
    <location>
        <position position="186"/>
    </location>
    <ligand>
        <name>FMN</name>
        <dbReference type="ChEBI" id="CHEBI:58210"/>
    </ligand>
</feature>
<feature type="binding site" evidence="1">
    <location>
        <begin position="192"/>
        <end position="194"/>
    </location>
    <ligand>
        <name>substrate</name>
    </ligand>
</feature>
<feature type="binding site" evidence="1">
    <location>
        <position position="196"/>
    </location>
    <ligand>
        <name>FMN</name>
        <dbReference type="ChEBI" id="CHEBI:58210"/>
    </ligand>
</feature>
<evidence type="ECO:0000255" key="1">
    <source>
        <dbReference type="HAMAP-Rule" id="MF_01629"/>
    </source>
</evidence>